<gene>
    <name type="ordered locus">LMOf2365_1079</name>
</gene>
<feature type="chain" id="PRO_0000216679" description="UPF0223 protein LMOf2365_1079">
    <location>
        <begin position="1"/>
        <end position="90"/>
    </location>
</feature>
<organism>
    <name type="scientific">Listeria monocytogenes serotype 4b (strain F2365)</name>
    <dbReference type="NCBI Taxonomy" id="265669"/>
    <lineage>
        <taxon>Bacteria</taxon>
        <taxon>Bacillati</taxon>
        <taxon>Bacillota</taxon>
        <taxon>Bacilli</taxon>
        <taxon>Bacillales</taxon>
        <taxon>Listeriaceae</taxon>
        <taxon>Listeria</taxon>
    </lineage>
</organism>
<protein>
    <recommendedName>
        <fullName evidence="1">UPF0223 protein LMOf2365_1079</fullName>
    </recommendedName>
</protein>
<evidence type="ECO:0000255" key="1">
    <source>
        <dbReference type="HAMAP-Rule" id="MF_01041"/>
    </source>
</evidence>
<comment type="similarity">
    <text evidence="1">Belongs to the UPF0223 family.</text>
</comment>
<dbReference type="EMBL" id="AE017262">
    <property type="protein sequence ID" value="AAT03856.1"/>
    <property type="molecule type" value="Genomic_DNA"/>
</dbReference>
<dbReference type="RefSeq" id="WP_003722685.1">
    <property type="nucleotide sequence ID" value="NC_002973.6"/>
</dbReference>
<dbReference type="SMR" id="Q721A8"/>
<dbReference type="KEGG" id="lmf:LMOf2365_1079"/>
<dbReference type="HOGENOM" id="CLU_166693_1_0_9"/>
<dbReference type="Gene3D" id="1.10.220.80">
    <property type="entry name" value="BH2638-like"/>
    <property type="match status" value="1"/>
</dbReference>
<dbReference type="HAMAP" id="MF_01041">
    <property type="entry name" value="UPF0223"/>
    <property type="match status" value="1"/>
</dbReference>
<dbReference type="InterPro" id="IPR023324">
    <property type="entry name" value="BH2638-like_sf"/>
</dbReference>
<dbReference type="InterPro" id="IPR007920">
    <property type="entry name" value="UPF0223"/>
</dbReference>
<dbReference type="NCBIfam" id="NF003353">
    <property type="entry name" value="PRK04387.1"/>
    <property type="match status" value="1"/>
</dbReference>
<dbReference type="Pfam" id="PF05256">
    <property type="entry name" value="UPF0223"/>
    <property type="match status" value="1"/>
</dbReference>
<dbReference type="PIRSF" id="PIRSF037260">
    <property type="entry name" value="UPF0223"/>
    <property type="match status" value="1"/>
</dbReference>
<dbReference type="SUPFAM" id="SSF158504">
    <property type="entry name" value="BH2638-like"/>
    <property type="match status" value="1"/>
</dbReference>
<sequence length="90" mass="10443">MEYSYPLNPDWTTEEMTIVVQFLEAIERAYEKGIDTLELKEKYRAFKQVVPAKGEEKRIGIDFEKASGYSAYKVMQLVKNATTSKIKMQP</sequence>
<accession>Q721A8</accession>
<proteinExistence type="inferred from homology"/>
<reference key="1">
    <citation type="journal article" date="2004" name="Nucleic Acids Res.">
        <title>Whole genome comparisons of serotype 4b and 1/2a strains of the food-borne pathogen Listeria monocytogenes reveal new insights into the core genome components of this species.</title>
        <authorList>
            <person name="Nelson K.E."/>
            <person name="Fouts D.E."/>
            <person name="Mongodin E.F."/>
            <person name="Ravel J."/>
            <person name="DeBoy R.T."/>
            <person name="Kolonay J.F."/>
            <person name="Rasko D.A."/>
            <person name="Angiuoli S.V."/>
            <person name="Gill S.R."/>
            <person name="Paulsen I.T."/>
            <person name="Peterson J.D."/>
            <person name="White O."/>
            <person name="Nelson W.C."/>
            <person name="Nierman W.C."/>
            <person name="Beanan M.J."/>
            <person name="Brinkac L.M."/>
            <person name="Daugherty S.C."/>
            <person name="Dodson R.J."/>
            <person name="Durkin A.S."/>
            <person name="Madupu R."/>
            <person name="Haft D.H."/>
            <person name="Selengut J."/>
            <person name="Van Aken S.E."/>
            <person name="Khouri H.M."/>
            <person name="Fedorova N."/>
            <person name="Forberger H.A."/>
            <person name="Tran B."/>
            <person name="Kathariou S."/>
            <person name="Wonderling L.D."/>
            <person name="Uhlich G.A."/>
            <person name="Bayles D.O."/>
            <person name="Luchansky J.B."/>
            <person name="Fraser C.M."/>
        </authorList>
    </citation>
    <scope>NUCLEOTIDE SEQUENCE [LARGE SCALE GENOMIC DNA]</scope>
    <source>
        <strain>F2365</strain>
    </source>
</reference>
<name>Y1079_LISMF</name>